<name>MYO2_SACU7</name>
<sequence length="1568" mass="179917">MSFEVGTRCWYPHKELGWIGAEVIKNEVKDGKYHLELSLEDDEVVSVDTEDLNDDKNQSLPLLRNPPILEATEDLTSLSYLNEPAVLHAIKQRYSQLNIYTYSGIVLIATNPFDRVDQLYTQDMIQAYAGKRRGELEPHLFAIAEEAYRLMKNDKQNQTIVVSGESGAGKTVSAKYIMRYFASVEEENSTTIQHQVEMSETEQRILATNPIMEAFGNAKTTRNDNSSRFGKYLEILFDKETSIIGARIRTYLLERSRLVYQPPIERNYHIFYQLMAGLPAQTKEELHLTDASDYFYMNQGGDTKIAGIDDAEEYQTTVDALTLVGITTATQHQIFKILAALLHIGNIEIKKTRNDASLSADEPSLKLACELLGIDSYNFAKWITKKQIVTRSEKIVSNLNFNQAMVAKDSVAKFIYSALFDWLVENINTVLCNPDVDDQINSFIGVLDIYGFEHFEKNSFEQFCINYANEKLQQEFNQHVFKLEQEEYVAEEIEWSFIEFNDNQPCIDLIENKLGILSLLDEESRLPAGSDESWTQKLYQTLDKSPTNEVFSKPRFGQTKFIVSHYALDVAYDVEGFIEKNRDTVSDGHLEVLKASTNETLINILEGLENAAKKLEETKKAELEQNNPGNKKPGPARTVNRKPTLGSMFKQSLIELMSTINSTNVHYIRCIKPNADKEAWQFDNLMVLSQLRACGVLETIRISCAGFPSRWTFEEFVLRYYILIPHEEWDLIFQKKETTEDDIISVVKMILDATVKDKTKYQIGNTKIFFKAGMLAYLEKLRSNKMHNSIVTIQKKIRAKYYRNQYLKISQAIKIWQSNTRGFIIRHRVYHEMKVHSATLIQATYRGYAIRKNVFNVLITIINLQTRIREELKRKQLKREHEYNAAVTIQSKVRTFEPRSTFLNTKRDTVVVQSLIRRRAAQGRLRQLKSDAKSVHHLKEVSYKLENKVIELTQNLASKVKENKEMTERIKELQVQVEESAKLQETLENMKKEHLVNIDNQKNKDMELQKTIEDNLQSTEQNLKNAQLELEEMVKQHNELKEESRKQLDELDETKKALVEHQTLNGDLQNEVKSLKEEISRLQTAMSLGTVTTSVLPQTPLKDVMGGSTANYNSLMLDNAELSPGKSRTTPMSGNHIDSLNIDQDNGANATQINEELYRLLEDTEILNQEITEGLLKGFEVPDAGVAIQLSKRDVVYPARILIIVLSEMWRFGLTKQSESFLAQVLTTIQKVVTQLKGNDLIPSGVFWLANVRELYSFVVFALNSILTEETFKNGMTDEEYKEYVSLVTELKDDFEALSYNIYNIWLKKLQKQLQKKAINAVVISESLPGFSAGETSGFLNKIFANTEEYTMDDILTFFNSIYWCMKSFHIETEVFHAVVTTLLNYVDAICFNELIMKRNFLSWKRGLQLNYNVTRLEEWCKTHGLTGGTECLQHLIQTAKLLQVRKYTIEDIDILRGICYSLTPAQLQKLISQYQVADYESPIPQEILRYVADIVKKEAALSNDSKGHEHSSGIFITPETGPFTDPFSLIKTRKFDQVEAYIPAWLSLPATKRIVDLVAQQVVQDGH</sequence>
<feature type="chain" id="PRO_0000123485" description="Myosin-2">
    <location>
        <begin position="1"/>
        <end position="1568"/>
    </location>
</feature>
<feature type="domain" description="Myosin N-terminal SH3-like" evidence="6">
    <location>
        <begin position="4"/>
        <end position="57"/>
    </location>
</feature>
<feature type="domain" description="Myosin motor" evidence="5">
    <location>
        <begin position="70"/>
        <end position="783"/>
    </location>
</feature>
<feature type="domain" description="IQ 1" evidence="3">
    <location>
        <begin position="786"/>
        <end position="808"/>
    </location>
</feature>
<feature type="domain" description="IQ 2" evidence="3">
    <location>
        <begin position="809"/>
        <end position="833"/>
    </location>
</feature>
<feature type="domain" description="IQ 3" evidence="3">
    <location>
        <begin position="834"/>
        <end position="856"/>
    </location>
</feature>
<feature type="domain" description="IQ 4" evidence="3">
    <location>
        <begin position="857"/>
        <end position="881"/>
    </location>
</feature>
<feature type="domain" description="IQ 5" evidence="3">
    <location>
        <begin position="882"/>
        <end position="904"/>
    </location>
</feature>
<feature type="domain" description="IQ 6" evidence="3">
    <location>
        <begin position="905"/>
        <end position="934"/>
    </location>
</feature>
<feature type="domain" description="Dilute" evidence="4">
    <location>
        <begin position="1223"/>
        <end position="1498"/>
    </location>
</feature>
<feature type="region of interest" description="Actin-binding" evidence="1">
    <location>
        <begin position="443"/>
        <end position="523"/>
    </location>
</feature>
<feature type="region of interest" description="Disordered" evidence="7">
    <location>
        <begin position="619"/>
        <end position="641"/>
    </location>
</feature>
<feature type="region of interest" description="Non alpha-helical, tail domain">
    <location>
        <begin position="1089"/>
        <end position="1568"/>
    </location>
</feature>
<feature type="coiled-coil region" evidence="2">
    <location>
        <begin position="944"/>
        <end position="1088"/>
    </location>
</feature>
<feature type="binding site" evidence="2">
    <location>
        <begin position="164"/>
        <end position="171"/>
    </location>
    <ligand>
        <name>ATP</name>
        <dbReference type="ChEBI" id="CHEBI:30616"/>
    </ligand>
</feature>
<feature type="sequence conflict" description="In Ref. 2; AAO32407." evidence="8" ref="2">
    <original>KKTR</original>
    <variation>LTTT</variation>
    <location>
        <begin position="350"/>
        <end position="353"/>
    </location>
</feature>
<feature type="sequence conflict" description="In Ref. 2; AAO32407." evidence="8" ref="2">
    <original>S</original>
    <variation>R</variation>
    <location>
        <position position="364"/>
    </location>
</feature>
<feature type="sequence conflict" description="In Ref. 2; AAO32407." evidence="8" ref="2">
    <original>G</original>
    <variation>C</variation>
    <location>
        <position position="373"/>
    </location>
</feature>
<feature type="sequence conflict" description="In Ref. 2; AAO32407." evidence="8" ref="2">
    <original>S</original>
    <variation>P</variation>
    <location>
        <position position="376"/>
    </location>
</feature>
<feature type="sequence conflict" description="In Ref. 2; AAO32407." evidence="8" ref="2">
    <original>K</original>
    <variation>N</variation>
    <location>
        <position position="385"/>
    </location>
</feature>
<proteinExistence type="inferred from homology"/>
<gene>
    <name type="primary">MYO2</name>
</gene>
<organism>
    <name type="scientific">Saccharomyces uvarum (strain ATCC 76518 / CBS 7001 / CLIB 283 / NBRC 10550 / MCYC 623 / NCYC 2669 / NRRL Y-11845)</name>
    <name type="common">Yeast</name>
    <name type="synonym">Saccharomyces bayanus var. uvarum</name>
    <dbReference type="NCBI Taxonomy" id="659244"/>
    <lineage>
        <taxon>Eukaryota</taxon>
        <taxon>Fungi</taxon>
        <taxon>Dikarya</taxon>
        <taxon>Ascomycota</taxon>
        <taxon>Saccharomycotina</taxon>
        <taxon>Saccharomycetes</taxon>
        <taxon>Saccharomycetales</taxon>
        <taxon>Saccharomycetaceae</taxon>
        <taxon>Saccharomyces</taxon>
    </lineage>
</organism>
<evidence type="ECO:0000250" key="1"/>
<evidence type="ECO:0000255" key="2"/>
<evidence type="ECO:0000255" key="3">
    <source>
        <dbReference type="PROSITE-ProRule" id="PRU00116"/>
    </source>
</evidence>
<evidence type="ECO:0000255" key="4">
    <source>
        <dbReference type="PROSITE-ProRule" id="PRU00503"/>
    </source>
</evidence>
<evidence type="ECO:0000255" key="5">
    <source>
        <dbReference type="PROSITE-ProRule" id="PRU00782"/>
    </source>
</evidence>
<evidence type="ECO:0000255" key="6">
    <source>
        <dbReference type="PROSITE-ProRule" id="PRU01190"/>
    </source>
</evidence>
<evidence type="ECO:0000256" key="7">
    <source>
        <dbReference type="SAM" id="MobiDB-lite"/>
    </source>
</evidence>
<evidence type="ECO:0000305" key="8"/>
<protein>
    <recommendedName>
        <fullName>Myosin-2</fullName>
    </recommendedName>
    <alternativeName>
        <fullName>Class V unconventional myosin MYO2</fullName>
    </alternativeName>
    <alternativeName>
        <fullName>Type V myosin heavy chain MYO2</fullName>
        <shortName>Myosin V MYO2</shortName>
    </alternativeName>
</protein>
<dbReference type="EMBL" id="AACA01000061">
    <property type="status" value="NOT_ANNOTATED_CDS"/>
    <property type="molecule type" value="Genomic_DNA"/>
</dbReference>
<dbReference type="EMBL" id="AY144842">
    <property type="protein sequence ID" value="AAO32406.1"/>
    <property type="molecule type" value="Genomic_DNA"/>
</dbReference>
<dbReference type="EMBL" id="AY144843">
    <property type="protein sequence ID" value="AAO32407.1"/>
    <property type="molecule type" value="Genomic_DNA"/>
</dbReference>
<dbReference type="SMR" id="Q876G9"/>
<dbReference type="GO" id="GO:0005737">
    <property type="term" value="C:cytoplasm"/>
    <property type="evidence" value="ECO:0007669"/>
    <property type="project" value="TreeGrafter"/>
</dbReference>
<dbReference type="GO" id="GO:0016020">
    <property type="term" value="C:membrane"/>
    <property type="evidence" value="ECO:0007669"/>
    <property type="project" value="TreeGrafter"/>
</dbReference>
<dbReference type="GO" id="GO:0016459">
    <property type="term" value="C:myosin complex"/>
    <property type="evidence" value="ECO:0007669"/>
    <property type="project" value="UniProtKB-KW"/>
</dbReference>
<dbReference type="GO" id="GO:0051015">
    <property type="term" value="F:actin filament binding"/>
    <property type="evidence" value="ECO:0007669"/>
    <property type="project" value="TreeGrafter"/>
</dbReference>
<dbReference type="GO" id="GO:0005524">
    <property type="term" value="F:ATP binding"/>
    <property type="evidence" value="ECO:0007669"/>
    <property type="project" value="UniProtKB-KW"/>
</dbReference>
<dbReference type="GO" id="GO:0000146">
    <property type="term" value="F:microfilament motor activity"/>
    <property type="evidence" value="ECO:0007669"/>
    <property type="project" value="TreeGrafter"/>
</dbReference>
<dbReference type="GO" id="GO:0007015">
    <property type="term" value="P:actin filament organization"/>
    <property type="evidence" value="ECO:0007669"/>
    <property type="project" value="TreeGrafter"/>
</dbReference>
<dbReference type="GO" id="GO:0015031">
    <property type="term" value="P:protein transport"/>
    <property type="evidence" value="ECO:0007669"/>
    <property type="project" value="UniProtKB-KW"/>
</dbReference>
<dbReference type="CDD" id="cd15480">
    <property type="entry name" value="fMyo2p_CBD"/>
    <property type="match status" value="1"/>
</dbReference>
<dbReference type="CDD" id="cd23767">
    <property type="entry name" value="IQCD"/>
    <property type="match status" value="1"/>
</dbReference>
<dbReference type="CDD" id="cd01380">
    <property type="entry name" value="MYSc_Myo5"/>
    <property type="match status" value="1"/>
</dbReference>
<dbReference type="FunFam" id="1.10.10.820:FF:000001">
    <property type="entry name" value="Myosin heavy chain"/>
    <property type="match status" value="1"/>
</dbReference>
<dbReference type="Gene3D" id="1.10.10.820">
    <property type="match status" value="1"/>
</dbReference>
<dbReference type="Gene3D" id="1.20.5.190">
    <property type="match status" value="3"/>
</dbReference>
<dbReference type="Gene3D" id="1.20.58.530">
    <property type="match status" value="1"/>
</dbReference>
<dbReference type="Gene3D" id="6.20.240.20">
    <property type="match status" value="1"/>
</dbReference>
<dbReference type="Gene3D" id="3.40.850.10">
    <property type="entry name" value="Kinesin motor domain"/>
    <property type="match status" value="1"/>
</dbReference>
<dbReference type="Gene3D" id="1.20.120.720">
    <property type="entry name" value="Myosin VI head, motor domain, U50 subdomain"/>
    <property type="match status" value="1"/>
</dbReference>
<dbReference type="InterPro" id="IPR002710">
    <property type="entry name" value="Dilute_dom"/>
</dbReference>
<dbReference type="InterPro" id="IPR046943">
    <property type="entry name" value="Fungal_Myo2/2A_CBD"/>
</dbReference>
<dbReference type="InterPro" id="IPR000048">
    <property type="entry name" value="IQ_motif_EF-hand-BS"/>
</dbReference>
<dbReference type="InterPro" id="IPR036961">
    <property type="entry name" value="Kinesin_motor_dom_sf"/>
</dbReference>
<dbReference type="InterPro" id="IPR001609">
    <property type="entry name" value="Myosin_head_motor_dom-like"/>
</dbReference>
<dbReference type="InterPro" id="IPR004009">
    <property type="entry name" value="Myosin_N"/>
</dbReference>
<dbReference type="InterPro" id="IPR036103">
    <property type="entry name" value="MYSc_Myo5"/>
</dbReference>
<dbReference type="InterPro" id="IPR027417">
    <property type="entry name" value="P-loop_NTPase"/>
</dbReference>
<dbReference type="PANTHER" id="PTHR13140:SF706">
    <property type="entry name" value="DILUTE CLASS UNCONVENTIONAL MYOSIN, ISOFORM C"/>
    <property type="match status" value="1"/>
</dbReference>
<dbReference type="PANTHER" id="PTHR13140">
    <property type="entry name" value="MYOSIN"/>
    <property type="match status" value="1"/>
</dbReference>
<dbReference type="Pfam" id="PF01843">
    <property type="entry name" value="DIL"/>
    <property type="match status" value="1"/>
</dbReference>
<dbReference type="Pfam" id="PF00063">
    <property type="entry name" value="Myosin_head"/>
    <property type="match status" value="1"/>
</dbReference>
<dbReference type="PRINTS" id="PR00193">
    <property type="entry name" value="MYOSINHEAVY"/>
</dbReference>
<dbReference type="SMART" id="SM01132">
    <property type="entry name" value="DIL"/>
    <property type="match status" value="1"/>
</dbReference>
<dbReference type="SMART" id="SM00015">
    <property type="entry name" value="IQ"/>
    <property type="match status" value="3"/>
</dbReference>
<dbReference type="SMART" id="SM00242">
    <property type="entry name" value="MYSc"/>
    <property type="match status" value="1"/>
</dbReference>
<dbReference type="SUPFAM" id="SSF50084">
    <property type="entry name" value="Myosin S1 fragment, N-terminal domain"/>
    <property type="match status" value="1"/>
</dbReference>
<dbReference type="SUPFAM" id="SSF52540">
    <property type="entry name" value="P-loop containing nucleoside triphosphate hydrolases"/>
    <property type="match status" value="2"/>
</dbReference>
<dbReference type="PROSITE" id="PS51126">
    <property type="entry name" value="DILUTE"/>
    <property type="match status" value="1"/>
</dbReference>
<dbReference type="PROSITE" id="PS50096">
    <property type="entry name" value="IQ"/>
    <property type="match status" value="1"/>
</dbReference>
<dbReference type="PROSITE" id="PS51456">
    <property type="entry name" value="MYOSIN_MOTOR"/>
    <property type="match status" value="1"/>
</dbReference>
<dbReference type="PROSITE" id="PS51844">
    <property type="entry name" value="SH3_LIKE"/>
    <property type="match status" value="1"/>
</dbReference>
<reference key="1">
    <citation type="journal article" date="2003" name="Nature">
        <title>Sequencing and comparison of yeast species to identify genes and regulatory elements.</title>
        <authorList>
            <person name="Kellis M."/>
            <person name="Patterson N."/>
            <person name="Endrizzi M."/>
            <person name="Birren B.W."/>
            <person name="Lander E.S."/>
        </authorList>
    </citation>
    <scope>NUCLEOTIDE SEQUENCE [GENOMIC DNA]</scope>
    <source>
        <strain>ATCC 76518 / CBS 7001 / CLIB 283 / NBRC 10550 / MCYC 623 / NCYC 2669 / NRRL Y-11845</strain>
    </source>
</reference>
<reference key="2">
    <citation type="journal article" date="2003" name="Nature">
        <title>Yeast genome duplication was followed by asynchronous differentiation of duplicated genes.</title>
        <authorList>
            <person name="Langkjaer R.B."/>
            <person name="Cliften P.F."/>
            <person name="Johnston M."/>
            <person name="Piskur J."/>
        </authorList>
    </citation>
    <scope>NUCLEOTIDE SEQUENCE [GENOMIC DNA] OF 1-271 AND 348-1046</scope>
    <source>
        <strain>623-6C / CBS 9787 / CLIB 533</strain>
    </source>
</reference>
<keyword id="KW-0009">Actin-binding</keyword>
<keyword id="KW-0067">ATP-binding</keyword>
<keyword id="KW-0131">Cell cycle</keyword>
<keyword id="KW-0175">Coiled coil</keyword>
<keyword id="KW-0505">Motor protein</keyword>
<keyword id="KW-0518">Myosin</keyword>
<keyword id="KW-0547">Nucleotide-binding</keyword>
<keyword id="KW-0653">Protein transport</keyword>
<keyword id="KW-0677">Repeat</keyword>
<keyword id="KW-0813">Transport</keyword>
<accession>Q876G9</accession>
<accession>Q876G8</accession>
<comment type="function">
    <text evidence="1">Myosin heavy chain that is required for the cell cycle-regulated transport of various organelles and proteins for their segregation. Functions by binding with its tail domain to receptor proteins on organelles and exerting force with its N-terminal motor domain against actin filaments, thereby transporting its cargo along polarized actin cables (By similarity).</text>
</comment>
<comment type="subunit">
    <text evidence="1">Homodimer. Interacts with calmodulin (CMD1) and the myosin light chain MLC1 through its IQ repeats (By similarity).</text>
</comment>
<comment type="similarity">
    <text evidence="8">Belongs to the TRAFAC class myosin-kinesin ATPase superfamily. Myosin family.</text>
</comment>